<dbReference type="EMBL" id="EF179407">
    <property type="protein sequence ID" value="ABM55413.1"/>
    <property type="molecule type" value="mRNA"/>
</dbReference>
<dbReference type="GO" id="GO:0005576">
    <property type="term" value="C:extracellular region"/>
    <property type="evidence" value="ECO:0007669"/>
    <property type="project" value="UniProtKB-SubCell"/>
</dbReference>
<dbReference type="GO" id="GO:0016791">
    <property type="term" value="F:phosphatase activity"/>
    <property type="evidence" value="ECO:0007669"/>
    <property type="project" value="UniProtKB-ARBA"/>
</dbReference>
<dbReference type="Gene3D" id="3.40.50.1240">
    <property type="entry name" value="Phosphoglycerate mutase-like"/>
    <property type="match status" value="1"/>
</dbReference>
<dbReference type="InterPro" id="IPR029033">
    <property type="entry name" value="His_PPase_superfam"/>
</dbReference>
<dbReference type="SUPFAM" id="SSF53254">
    <property type="entry name" value="Phosphoglycerate mutase-like"/>
    <property type="match status" value="1"/>
</dbReference>
<sequence>MKTTILLLVVLTIVQLSKAKDNLQFVFVTAKGQDHQACNYPQGPKITNIEEPDSELTEDGKKEAYEFGQKLSSEYKSRLGVTKWDSAQNYWAIAAIEKRTKKATLITAGVIAKRQSVTSKTWSDEELQKTSFPALNDFFRFINPQHCPKYIKSILSKQNDINTILGKCEAALKTVKEHYPAVNKPQHTWLVYETFKRMKQQKASNLEWLTDDIMKQLQACSAEITWFAATNSDEWRKISGGLLLTDIFTDLDQITQGKPQPYAPGGANNKMSLFTVPQVLVISHLAVITPPGTKIGSKDVTAQNIYPEDGAYVNLELFKGDKEDWKVKIVYVKGKGEPQQTIALPGCPEKCPYNKFKQILQQYAISDDDHKKACGFPA</sequence>
<evidence type="ECO:0000250" key="1">
    <source>
        <dbReference type="UniProtKB" id="A2IA89"/>
    </source>
</evidence>
<evidence type="ECO:0000255" key="2"/>
<evidence type="ECO:0000269" key="3">
    <source>
    </source>
</evidence>
<evidence type="ECO:0000303" key="4">
    <source>
    </source>
</evidence>
<evidence type="ECO:0000305" key="5"/>
<evidence type="ECO:0000312" key="6">
    <source>
        <dbReference type="EMBL" id="ABM55413.1"/>
    </source>
</evidence>
<protein>
    <recommendedName>
        <fullName evidence="4">Acid phosphatase-like protein XcAP-2</fullName>
        <shortName evidence="4">XcAP-2</shortName>
    </recommendedName>
</protein>
<accession>A2IA93</accession>
<reference evidence="6" key="1">
    <citation type="journal article" date="2007" name="BMC Genomics">
        <title>An insight into the sialome of the oriental rat flea, Xenopsylla cheopis (Rots).</title>
        <authorList>
            <person name="Andersen J.F."/>
            <person name="Hinnebusch B.J."/>
            <person name="Lucas D.A."/>
            <person name="Conrads T.P."/>
            <person name="Veenstra T.D."/>
            <person name="Pham V.M."/>
            <person name="Ribeiro J.M."/>
        </authorList>
    </citation>
    <scope>NUCLEOTIDE SEQUENCE [LARGE SCALE MRNA]</scope>
    <source>
        <tissue evidence="6">Salivary gland</tissue>
    </source>
</reference>
<reference evidence="5" key="2">
    <citation type="journal article" date="2023" name="Commun. Biol.">
        <title>Acid phosphatase-like proteins, a biogenic amine and leukotriene-binding salivary protein family from the flea Xenopsylla cheopis.</title>
        <authorList>
            <person name="Lu S."/>
            <person name="Andersen J.F."/>
            <person name="Bosio C.F."/>
            <person name="Hinnebusch B.J."/>
            <person name="Ribeiro J.M."/>
        </authorList>
    </citation>
    <scope>FUNCTION</scope>
    <scope>DOMAIN</scope>
    <scope>CAUTION</scope>
</reference>
<organism>
    <name type="scientific">Xenopsylla cheopis</name>
    <name type="common">Oriental rat flea</name>
    <name type="synonym">Pulex cheopis</name>
    <dbReference type="NCBI Taxonomy" id="163159"/>
    <lineage>
        <taxon>Eukaryota</taxon>
        <taxon>Metazoa</taxon>
        <taxon>Ecdysozoa</taxon>
        <taxon>Arthropoda</taxon>
        <taxon>Hexapoda</taxon>
        <taxon>Insecta</taxon>
        <taxon>Pterygota</taxon>
        <taxon>Neoptera</taxon>
        <taxon>Endopterygota</taxon>
        <taxon>Siphonaptera</taxon>
        <taxon>Pulicidae</taxon>
        <taxon>Xenopsyllinae</taxon>
        <taxon>Xenopsylla</taxon>
    </lineage>
</organism>
<name>XCAP2_XENCH</name>
<proteinExistence type="evidence at transcript level"/>
<feature type="signal peptide" evidence="2">
    <location>
        <begin position="1"/>
        <end position="19"/>
    </location>
</feature>
<feature type="chain" id="PRO_5002643847" description="Acid phosphatase-like protein XcAP-2" evidence="2">
    <location>
        <begin position="20"/>
        <end position="378"/>
    </location>
</feature>
<feature type="disulfide bond" evidence="1">
    <location>
        <begin position="147"/>
        <end position="374"/>
    </location>
</feature>
<feature type="disulfide bond" evidence="1">
    <location>
        <begin position="168"/>
        <end position="220"/>
    </location>
</feature>
<feature type="disulfide bond" evidence="1">
    <location>
        <begin position="347"/>
        <end position="351"/>
    </location>
</feature>
<keyword id="KW-1015">Disulfide bond</keyword>
<keyword id="KW-0964">Secreted</keyword>
<keyword id="KW-0732">Signal</keyword>
<comment type="function">
    <text evidence="3 5">Probably modulates blood feeding of fleas on vertebrate species by binding and sequestering different mediators involved in the host response (Probable). Binds histamine (PubMed:38110569). Binds leukotriene B4, leukotriene C4, leukotriene D4 and leukotriene E4 (PubMed:38110569). Does not bind serotonin, adrenaline, noradrenaline, ADP, and stable analogs of thromboxane A2: U-46619 and cTXA2 (PubMed:38110569).</text>
</comment>
<comment type="subcellular location">
    <subcellularLocation>
        <location evidence="5">Secreted</location>
    </subcellularLocation>
</comment>
<comment type="domain">
    <text evidence="3">Lipids and biogenic amines bind independently through different binding pockets.</text>
</comment>
<comment type="similarity">
    <text evidence="5">Belongs to the histidine acid phosphatase family.</text>
</comment>
<comment type="caution">
    <text evidence="3">Lacks acid phosphatase catalytic activity.</text>
</comment>